<name>NRDR_STRPZ</name>
<keyword id="KW-0067">ATP-binding</keyword>
<keyword id="KW-0238">DNA-binding</keyword>
<keyword id="KW-0479">Metal-binding</keyword>
<keyword id="KW-0547">Nucleotide-binding</keyword>
<keyword id="KW-0678">Repressor</keyword>
<keyword id="KW-0804">Transcription</keyword>
<keyword id="KW-0805">Transcription regulation</keyword>
<keyword id="KW-0862">Zinc</keyword>
<keyword id="KW-0863">Zinc-finger</keyword>
<comment type="function">
    <text evidence="1">Negatively regulates transcription of bacterial ribonucleotide reductase nrd genes and operons by binding to NrdR-boxes.</text>
</comment>
<comment type="cofactor">
    <cofactor evidence="1">
        <name>Zn(2+)</name>
        <dbReference type="ChEBI" id="CHEBI:29105"/>
    </cofactor>
    <text evidence="1">Binds 1 zinc ion.</text>
</comment>
<comment type="similarity">
    <text evidence="1">Belongs to the NrdR family.</text>
</comment>
<proteinExistence type="inferred from homology"/>
<reference key="1">
    <citation type="journal article" date="2008" name="J. Bacteriol.">
        <title>Genome sequence of a nephritogenic and highly transformable M49 strain of Streptococcus pyogenes.</title>
        <authorList>
            <person name="McShan W.M."/>
            <person name="Ferretti J.J."/>
            <person name="Karasawa T."/>
            <person name="Suvorov A.N."/>
            <person name="Lin S."/>
            <person name="Qin B."/>
            <person name="Jia H."/>
            <person name="Kenton S."/>
            <person name="Najar F."/>
            <person name="Wu H."/>
            <person name="Scott J."/>
            <person name="Roe B.A."/>
            <person name="Savic D.J."/>
        </authorList>
    </citation>
    <scope>NUCLEOTIDE SEQUENCE [LARGE SCALE GENOMIC DNA]</scope>
    <source>
        <strain>NZ131</strain>
    </source>
</reference>
<protein>
    <recommendedName>
        <fullName evidence="1">Transcriptional repressor NrdR</fullName>
    </recommendedName>
</protein>
<accession>B5XJV7</accession>
<organism>
    <name type="scientific">Streptococcus pyogenes serotype M49 (strain NZ131)</name>
    <dbReference type="NCBI Taxonomy" id="471876"/>
    <lineage>
        <taxon>Bacteria</taxon>
        <taxon>Bacillati</taxon>
        <taxon>Bacillota</taxon>
        <taxon>Bacilli</taxon>
        <taxon>Lactobacillales</taxon>
        <taxon>Streptococcaceae</taxon>
        <taxon>Streptococcus</taxon>
    </lineage>
</organism>
<evidence type="ECO:0000255" key="1">
    <source>
        <dbReference type="HAMAP-Rule" id="MF_00440"/>
    </source>
</evidence>
<sequence>MRCPKCNYHKSSVVDSRQAEDGNTIRRRRECEQCHTRFTTFERVEELPLLVIKKDGTREQFSRDKILNGVVQSAQKRPVSSTDIENVISRIEQEVRTTYENEVSSTAIGNLVMDELAELDEITYVRFASVYKSFKDVDEIEELLQQITNRVRGKKKRLNNDETN</sequence>
<gene>
    <name evidence="1" type="primary">nrdR</name>
    <name type="ordered locus">Spy49_0281</name>
</gene>
<feature type="chain" id="PRO_1000191822" description="Transcriptional repressor NrdR">
    <location>
        <begin position="1"/>
        <end position="164"/>
    </location>
</feature>
<feature type="domain" description="ATP-cone" evidence="1">
    <location>
        <begin position="49"/>
        <end position="139"/>
    </location>
</feature>
<feature type="zinc finger region" evidence="1">
    <location>
        <begin position="3"/>
        <end position="34"/>
    </location>
</feature>
<dbReference type="EMBL" id="CP000829">
    <property type="protein sequence ID" value="ACI60619.1"/>
    <property type="molecule type" value="Genomic_DNA"/>
</dbReference>
<dbReference type="SMR" id="B5XJV7"/>
<dbReference type="KEGG" id="soz:Spy49_0281"/>
<dbReference type="HOGENOM" id="CLU_108412_0_0_9"/>
<dbReference type="Proteomes" id="UP000001039">
    <property type="component" value="Chromosome"/>
</dbReference>
<dbReference type="GO" id="GO:0005524">
    <property type="term" value="F:ATP binding"/>
    <property type="evidence" value="ECO:0007669"/>
    <property type="project" value="UniProtKB-KW"/>
</dbReference>
<dbReference type="GO" id="GO:0003677">
    <property type="term" value="F:DNA binding"/>
    <property type="evidence" value="ECO:0007669"/>
    <property type="project" value="UniProtKB-KW"/>
</dbReference>
<dbReference type="GO" id="GO:0008270">
    <property type="term" value="F:zinc ion binding"/>
    <property type="evidence" value="ECO:0007669"/>
    <property type="project" value="UniProtKB-UniRule"/>
</dbReference>
<dbReference type="GO" id="GO:0045892">
    <property type="term" value="P:negative regulation of DNA-templated transcription"/>
    <property type="evidence" value="ECO:0007669"/>
    <property type="project" value="UniProtKB-UniRule"/>
</dbReference>
<dbReference type="HAMAP" id="MF_00440">
    <property type="entry name" value="NrdR"/>
    <property type="match status" value="1"/>
</dbReference>
<dbReference type="InterPro" id="IPR005144">
    <property type="entry name" value="ATP-cone_dom"/>
</dbReference>
<dbReference type="InterPro" id="IPR055173">
    <property type="entry name" value="NrdR-like_N"/>
</dbReference>
<dbReference type="InterPro" id="IPR003796">
    <property type="entry name" value="RNR_NrdR-like"/>
</dbReference>
<dbReference type="NCBIfam" id="TIGR00244">
    <property type="entry name" value="transcriptional regulator NrdR"/>
    <property type="match status" value="1"/>
</dbReference>
<dbReference type="PANTHER" id="PTHR30455">
    <property type="entry name" value="TRANSCRIPTIONAL REPRESSOR NRDR"/>
    <property type="match status" value="1"/>
</dbReference>
<dbReference type="PANTHER" id="PTHR30455:SF2">
    <property type="entry name" value="TRANSCRIPTIONAL REPRESSOR NRDR"/>
    <property type="match status" value="1"/>
</dbReference>
<dbReference type="Pfam" id="PF03477">
    <property type="entry name" value="ATP-cone"/>
    <property type="match status" value="1"/>
</dbReference>
<dbReference type="Pfam" id="PF22811">
    <property type="entry name" value="Zn_ribbon_NrdR"/>
    <property type="match status" value="1"/>
</dbReference>
<dbReference type="PROSITE" id="PS51161">
    <property type="entry name" value="ATP_CONE"/>
    <property type="match status" value="1"/>
</dbReference>